<comment type="function">
    <text evidence="1">Catalyzes the phosphorylation of pantothenate (Pan), the first step in CoA biosynthesis.</text>
</comment>
<comment type="catalytic activity">
    <reaction evidence="1">
        <text>(R)-pantothenate + ATP = (R)-4'-phosphopantothenate + ADP + H(+)</text>
        <dbReference type="Rhea" id="RHEA:16373"/>
        <dbReference type="ChEBI" id="CHEBI:10986"/>
        <dbReference type="ChEBI" id="CHEBI:15378"/>
        <dbReference type="ChEBI" id="CHEBI:29032"/>
        <dbReference type="ChEBI" id="CHEBI:30616"/>
        <dbReference type="ChEBI" id="CHEBI:456216"/>
        <dbReference type="EC" id="2.7.1.33"/>
    </reaction>
</comment>
<comment type="cofactor">
    <cofactor evidence="1">
        <name>NH4(+)</name>
        <dbReference type="ChEBI" id="CHEBI:28938"/>
    </cofactor>
    <cofactor evidence="1">
        <name>K(+)</name>
        <dbReference type="ChEBI" id="CHEBI:29103"/>
    </cofactor>
    <text evidence="1">A monovalent cation. Ammonium or potassium.</text>
</comment>
<comment type="pathway">
    <text evidence="1">Cofactor biosynthesis; coenzyme A biosynthesis; CoA from (R)-pantothenate: step 1/5.</text>
</comment>
<comment type="subunit">
    <text evidence="1">Homodimer.</text>
</comment>
<comment type="subcellular location">
    <subcellularLocation>
        <location evidence="1">Cytoplasm</location>
    </subcellularLocation>
</comment>
<comment type="similarity">
    <text evidence="1">Belongs to the type III pantothenate kinase family.</text>
</comment>
<proteinExistence type="inferred from homology"/>
<reference key="1">
    <citation type="journal article" date="2008" name="Proc. Natl. Acad. Sci. U.S.A.">
        <title>The genome sequence of Bifidobacterium longum subsp. infantis reveals adaptations for milk utilization within the infant microbiome.</title>
        <authorList>
            <person name="Sela D.A."/>
            <person name="Chapman J."/>
            <person name="Adeuya A."/>
            <person name="Kim J.H."/>
            <person name="Chen F."/>
            <person name="Whitehead T.R."/>
            <person name="Lapidus A."/>
            <person name="Rokhsar D.S."/>
            <person name="Lebrilla C.B."/>
            <person name="German J.B."/>
            <person name="Price N.P."/>
            <person name="Richardson P.M."/>
            <person name="Mills D.A."/>
        </authorList>
    </citation>
    <scope>NUCLEOTIDE SEQUENCE [LARGE SCALE GENOMIC DNA]</scope>
    <source>
        <strain>ATCC 15697 / DSM 20088 / JCM 1222 / NCTC 11817 / S12</strain>
    </source>
</reference>
<reference key="2">
    <citation type="journal article" date="2011" name="Nature">
        <title>Bifidobacteria can protect from enteropathogenic infection through production of acetate.</title>
        <authorList>
            <person name="Fukuda S."/>
            <person name="Toh H."/>
            <person name="Hase K."/>
            <person name="Oshima K."/>
            <person name="Nakanishi Y."/>
            <person name="Yoshimura K."/>
            <person name="Tobe T."/>
            <person name="Clarke J.M."/>
            <person name="Topping D.L."/>
            <person name="Suzuki T."/>
            <person name="Taylor T.D."/>
            <person name="Itoh K."/>
            <person name="Kikuchi J."/>
            <person name="Morita H."/>
            <person name="Hattori M."/>
            <person name="Ohno H."/>
        </authorList>
    </citation>
    <scope>NUCLEOTIDE SEQUENCE [LARGE SCALE GENOMIC DNA]</scope>
    <source>
        <strain>ATCC 15697 / DSM 20088 / JCM 1222 / NCTC 11817 / S12</strain>
    </source>
</reference>
<protein>
    <recommendedName>
        <fullName evidence="1">Type III pantothenate kinase</fullName>
        <ecNumber evidence="1">2.7.1.33</ecNumber>
    </recommendedName>
    <alternativeName>
        <fullName evidence="1">PanK-III</fullName>
    </alternativeName>
    <alternativeName>
        <fullName evidence="1">Pantothenic acid kinase</fullName>
    </alternativeName>
</protein>
<gene>
    <name evidence="1" type="primary">coaX</name>
    <name type="ordered locus">Blon_2014</name>
    <name type="ordered locus">BLIJ_2089</name>
</gene>
<evidence type="ECO:0000255" key="1">
    <source>
        <dbReference type="HAMAP-Rule" id="MF_01274"/>
    </source>
</evidence>
<sequence>MLMAVDIGNTNIVIGFLEGDRIVGSYRITTKATHTSDEYGLMITQFLALSDYTADDVDDVIVCSVVPKVMYSFRASLIKFLGLEPMVVGPGVKTGMNIRLDDPKTLGSDCIADCAGAYHTYGGPVLVADFGTATTFNYVDSSGTIRSGFITTGIRTGAEALWGQTAQLPEVEITQPQSILATNTRTAMQAGLYYTFLGGIERTIQQFRKEIDEPFQVVATGGLSRIFKNNTDMIDVYDSDLIFKGMAYIYSRNVK</sequence>
<feature type="chain" id="PRO_1000165189" description="Type III pantothenate kinase">
    <location>
        <begin position="1"/>
        <end position="255"/>
    </location>
</feature>
<feature type="active site" description="Proton acceptor" evidence="1">
    <location>
        <position position="109"/>
    </location>
</feature>
<feature type="binding site" evidence="1">
    <location>
        <begin position="6"/>
        <end position="13"/>
    </location>
    <ligand>
        <name>ATP</name>
        <dbReference type="ChEBI" id="CHEBI:30616"/>
    </ligand>
</feature>
<feature type="binding site" evidence="1">
    <location>
        <begin position="107"/>
        <end position="110"/>
    </location>
    <ligand>
        <name>substrate</name>
    </ligand>
</feature>
<feature type="binding site" evidence="1">
    <location>
        <position position="129"/>
    </location>
    <ligand>
        <name>K(+)</name>
        <dbReference type="ChEBI" id="CHEBI:29103"/>
    </ligand>
</feature>
<feature type="binding site" evidence="1">
    <location>
        <position position="132"/>
    </location>
    <ligand>
        <name>ATP</name>
        <dbReference type="ChEBI" id="CHEBI:30616"/>
    </ligand>
</feature>
<feature type="binding site" evidence="1">
    <location>
        <position position="184"/>
    </location>
    <ligand>
        <name>substrate</name>
    </ligand>
</feature>
<dbReference type="EC" id="2.7.1.33" evidence="1"/>
<dbReference type="EMBL" id="CP001095">
    <property type="protein sequence ID" value="ACJ53081.1"/>
    <property type="molecule type" value="Genomic_DNA"/>
</dbReference>
<dbReference type="EMBL" id="AP010889">
    <property type="protein sequence ID" value="BAJ69667.1"/>
    <property type="molecule type" value="Genomic_DNA"/>
</dbReference>
<dbReference type="RefSeq" id="WP_012578287.1">
    <property type="nucleotide sequence ID" value="NZ_JDTT01000005.1"/>
</dbReference>
<dbReference type="SMR" id="B7GUD5"/>
<dbReference type="KEGG" id="bln:Blon_2014"/>
<dbReference type="KEGG" id="blon:BLIJ_2089"/>
<dbReference type="PATRIC" id="fig|391904.8.peg.2095"/>
<dbReference type="HOGENOM" id="CLU_066627_1_0_11"/>
<dbReference type="UniPathway" id="UPA00241">
    <property type="reaction ID" value="UER00352"/>
</dbReference>
<dbReference type="Proteomes" id="UP000001360">
    <property type="component" value="Chromosome"/>
</dbReference>
<dbReference type="GO" id="GO:0005737">
    <property type="term" value="C:cytoplasm"/>
    <property type="evidence" value="ECO:0007669"/>
    <property type="project" value="UniProtKB-SubCell"/>
</dbReference>
<dbReference type="GO" id="GO:0005524">
    <property type="term" value="F:ATP binding"/>
    <property type="evidence" value="ECO:0007669"/>
    <property type="project" value="UniProtKB-UniRule"/>
</dbReference>
<dbReference type="GO" id="GO:0046872">
    <property type="term" value="F:metal ion binding"/>
    <property type="evidence" value="ECO:0007669"/>
    <property type="project" value="UniProtKB-KW"/>
</dbReference>
<dbReference type="GO" id="GO:0004594">
    <property type="term" value="F:pantothenate kinase activity"/>
    <property type="evidence" value="ECO:0007669"/>
    <property type="project" value="UniProtKB-UniRule"/>
</dbReference>
<dbReference type="GO" id="GO:0015937">
    <property type="term" value="P:coenzyme A biosynthetic process"/>
    <property type="evidence" value="ECO:0007669"/>
    <property type="project" value="UniProtKB-UniRule"/>
</dbReference>
<dbReference type="CDD" id="cd24015">
    <property type="entry name" value="ASKHA_NBD_PanK-III"/>
    <property type="match status" value="1"/>
</dbReference>
<dbReference type="Gene3D" id="3.30.420.40">
    <property type="match status" value="2"/>
</dbReference>
<dbReference type="HAMAP" id="MF_01274">
    <property type="entry name" value="Pantothen_kinase_3"/>
    <property type="match status" value="1"/>
</dbReference>
<dbReference type="InterPro" id="IPR043129">
    <property type="entry name" value="ATPase_NBD"/>
</dbReference>
<dbReference type="InterPro" id="IPR004619">
    <property type="entry name" value="Type_III_PanK"/>
</dbReference>
<dbReference type="NCBIfam" id="TIGR00671">
    <property type="entry name" value="baf"/>
    <property type="match status" value="1"/>
</dbReference>
<dbReference type="NCBIfam" id="NF009846">
    <property type="entry name" value="PRK13318.1-4"/>
    <property type="match status" value="1"/>
</dbReference>
<dbReference type="NCBIfam" id="NF009855">
    <property type="entry name" value="PRK13321.1"/>
    <property type="match status" value="1"/>
</dbReference>
<dbReference type="PANTHER" id="PTHR34265">
    <property type="entry name" value="TYPE III PANTOTHENATE KINASE"/>
    <property type="match status" value="1"/>
</dbReference>
<dbReference type="PANTHER" id="PTHR34265:SF1">
    <property type="entry name" value="TYPE III PANTOTHENATE KINASE"/>
    <property type="match status" value="1"/>
</dbReference>
<dbReference type="Pfam" id="PF03309">
    <property type="entry name" value="Pan_kinase"/>
    <property type="match status" value="1"/>
</dbReference>
<dbReference type="SUPFAM" id="SSF53067">
    <property type="entry name" value="Actin-like ATPase domain"/>
    <property type="match status" value="2"/>
</dbReference>
<name>COAX_BIFLS</name>
<keyword id="KW-0067">ATP-binding</keyword>
<keyword id="KW-0173">Coenzyme A biosynthesis</keyword>
<keyword id="KW-0963">Cytoplasm</keyword>
<keyword id="KW-0418">Kinase</keyword>
<keyword id="KW-0479">Metal-binding</keyword>
<keyword id="KW-0547">Nucleotide-binding</keyword>
<keyword id="KW-0630">Potassium</keyword>
<keyword id="KW-0808">Transferase</keyword>
<accession>B7GUD5</accession>
<accession>E8MM90</accession>
<organism>
    <name type="scientific">Bifidobacterium longum subsp. infantis (strain ATCC 15697 / DSM 20088 / JCM 1222 / NCTC 11817 / S12)</name>
    <dbReference type="NCBI Taxonomy" id="391904"/>
    <lineage>
        <taxon>Bacteria</taxon>
        <taxon>Bacillati</taxon>
        <taxon>Actinomycetota</taxon>
        <taxon>Actinomycetes</taxon>
        <taxon>Bifidobacteriales</taxon>
        <taxon>Bifidobacteriaceae</taxon>
        <taxon>Bifidobacterium</taxon>
    </lineage>
</organism>